<comment type="function">
    <text evidence="1 3 4 5">One of the components of the core complex of photosystem II (PSII). PSII binds chlorophyll and helps catalyze the primary light-induced photochemical processes of PSII. PSII is a light-driven water:plastoquinone oxidoreductase, using light energy to abstract electrons from H(2)O, generating O(2) and a proton gradient subsequently used for ATP formation (PubMed:34937700). Required for correct assembly of PSII (PubMed:1903653, PubMed:23148271).</text>
</comment>
<comment type="cofactor">
    <text evidence="1 5">Binds multiple chlorophylls and provides some of the ligands for the Ca-4Mn-5O cluster of the oxygen-evolving complex. It may also provide a ligand for a Cl- that is required for oxygen evolution. PSII binds additional chlorophylls, carotenoids and specific lipids.</text>
</comment>
<comment type="subunit">
    <text evidence="1 2 5">PSII is composed of 1 copy each of membrane proteins PsbA, PsbB, PsbC, PsbD, PsbE, PsbF, PsbH, PsbI, PsbJ, PsbK, PsbL, PsbM, PsbT, PsbX, PsbY, PsbZ, Psb30/Ycf12, peripheral proteins PsbO, CyanoQ (PsbQ), PsbU, PsbV and a large number of cofactors. It forms dimeric complexes.</text>
</comment>
<comment type="subcellular location">
    <subcellularLocation>
        <location evidence="1 2 5 6">Cellular thylakoid membrane</location>
        <topology evidence="1 5 6">Multi-pass membrane protein</topology>
    </subcellularLocation>
    <text evidence="5">PsbQ binds to the large lumenal domain of this protein between PsbO and PsbV.</text>
</comment>
<comment type="disruption phenotype">
    <text evidence="3 4">Unable to grow photoautotrophically or evolve O(2). About 10% mostly monomeric PSII accumulates, which corresponds to RC47, an intermediate in the normal path of PSII assembly. The intermediate is able to bind the primary and secondary electron donors and acceptors and can transfer electrons.</text>
</comment>
<comment type="similarity">
    <text evidence="1">Belongs to the PsbB/PsbC family. PsbC subfamily.</text>
</comment>
<comment type="sequence caution" evidence="8">
    <conflict type="erroneous initiation">
        <sequence resource="EMBL-CDS" id="AAA85378"/>
    </conflict>
    <text>Extended N-terminus.</text>
</comment>
<comment type="sequence caution" evidence="8">
    <conflict type="erroneous initiation">
        <sequence resource="EMBL-CDS" id="CAA30071"/>
    </conflict>
    <text>Extended N-terminus.</text>
</comment>
<protein>
    <recommendedName>
        <fullName evidence="1">Photosystem II CP43 reaction center protein</fullName>
    </recommendedName>
    <alternativeName>
        <fullName evidence="1">PSII 43 kDa protein</fullName>
    </alternativeName>
    <alternativeName>
        <fullName evidence="1 7">Protein CP-43</fullName>
    </alternativeName>
</protein>
<feature type="chain" id="PRO_0000077532" description="Photosystem II CP43 reaction center protein">
    <location>
        <begin position="1"/>
        <end position="460"/>
    </location>
</feature>
<feature type="topological domain" description="Cytoplasmic" evidence="5 9">
    <location>
        <begin position="1"/>
        <end position="35"/>
    </location>
</feature>
<feature type="transmembrane region" description="Helical" evidence="5 9">
    <location>
        <begin position="36"/>
        <end position="58"/>
    </location>
</feature>
<feature type="topological domain" description="Lumenal, thylakoid" evidence="5 9">
    <location>
        <begin position="59"/>
        <end position="98"/>
    </location>
</feature>
<feature type="transmembrane region" description="Helical" evidence="5 9">
    <location>
        <begin position="99"/>
        <end position="121"/>
    </location>
</feature>
<feature type="topological domain" description="Cytoplasmic" evidence="5 9">
    <location>
        <begin position="122"/>
        <end position="142"/>
    </location>
</feature>
<feature type="transmembrane region" description="Helical" evidence="5 9">
    <location>
        <begin position="143"/>
        <end position="165"/>
    </location>
</feature>
<feature type="topological domain" description="Lumenal, thylakoid" evidence="5 9">
    <location>
        <begin position="166"/>
        <end position="220"/>
    </location>
</feature>
<feature type="transmembrane region" description="Helical" evidence="5 9">
    <location>
        <begin position="221"/>
        <end position="240"/>
    </location>
</feature>
<feature type="topological domain" description="Cytoplasmic" evidence="5 9">
    <location>
        <begin position="241"/>
        <end position="255"/>
    </location>
</feature>
<feature type="transmembrane region" description="Helical" evidence="5 9">
    <location>
        <begin position="256"/>
        <end position="276"/>
    </location>
</feature>
<feature type="topological domain" description="Lumenal, thylakoid" evidence="5 9">
    <location>
        <begin position="277"/>
        <end position="411"/>
    </location>
</feature>
<feature type="transmembrane region" description="Helical" evidence="5 9">
    <location>
        <begin position="412"/>
        <end position="436"/>
    </location>
</feature>
<feature type="topological domain" description="Cytoplasmic" evidence="5 9">
    <location>
        <begin position="437"/>
        <end position="460"/>
    </location>
</feature>
<feature type="binding site" evidence="5 9">
    <location>
        <position position="341"/>
    </location>
    <ligand>
        <name>[CaMn4O5] cluster</name>
        <dbReference type="ChEBI" id="CHEBI:189552"/>
    </ligand>
</feature>
<feature type="binding site" evidence="5 9">
    <location>
        <position position="344"/>
    </location>
    <ligand>
        <name>[CaMn4O5] cluster</name>
        <dbReference type="ChEBI" id="CHEBI:189552"/>
    </ligand>
</feature>
<feature type="sequence conflict" description="In Ref. 1; AAA85378 and 3; CAA30071." evidence="8" ref="1 3">
    <original>A</original>
    <variation>R</variation>
    <location>
        <position position="42"/>
    </location>
</feature>
<feature type="sequence conflict" description="In Ref. 3; CAA30071." evidence="8" ref="3">
    <original>T</original>
    <variation>N</variation>
    <location>
        <position position="55"/>
    </location>
</feature>
<feature type="sequence conflict" description="In Ref. 3; CAA30071." evidence="8" ref="3">
    <original>Y</original>
    <variation>I</variation>
    <location>
        <position position="150"/>
    </location>
</feature>
<feature type="turn" evidence="12">
    <location>
        <begin position="16"/>
        <end position="18"/>
    </location>
</feature>
<feature type="helix" evidence="12">
    <location>
        <begin position="22"/>
        <end position="29"/>
    </location>
</feature>
<feature type="helix" evidence="12">
    <location>
        <begin position="33"/>
        <end position="60"/>
    </location>
</feature>
<feature type="helix" evidence="12">
    <location>
        <begin position="68"/>
        <end position="70"/>
    </location>
</feature>
<feature type="helix" evidence="12">
    <location>
        <begin position="76"/>
        <end position="81"/>
    </location>
</feature>
<feature type="strand" evidence="12">
    <location>
        <begin position="84"/>
        <end position="86"/>
    </location>
</feature>
<feature type="helix" evidence="12">
    <location>
        <begin position="88"/>
        <end position="90"/>
    </location>
</feature>
<feature type="helix" evidence="12">
    <location>
        <begin position="96"/>
        <end position="121"/>
    </location>
</feature>
<feature type="turn" evidence="12">
    <location>
        <begin position="128"/>
        <end position="130"/>
    </location>
</feature>
<feature type="turn" evidence="12">
    <location>
        <begin position="132"/>
        <end position="134"/>
    </location>
</feature>
<feature type="helix" evidence="12">
    <location>
        <begin position="141"/>
        <end position="168"/>
    </location>
</feature>
<feature type="strand" evidence="12">
    <location>
        <begin position="172"/>
        <end position="174"/>
    </location>
</feature>
<feature type="strand" evidence="12">
    <location>
        <begin position="180"/>
        <end position="184"/>
    </location>
</feature>
<feature type="helix" evidence="12">
    <location>
        <begin position="193"/>
        <end position="199"/>
    </location>
</feature>
<feature type="turn" evidence="12">
    <location>
        <begin position="206"/>
        <end position="208"/>
    </location>
</feature>
<feature type="turn" evidence="12">
    <location>
        <begin position="210"/>
        <end position="213"/>
    </location>
</feature>
<feature type="helix" evidence="12">
    <location>
        <begin position="217"/>
        <end position="240"/>
    </location>
</feature>
<feature type="helix" evidence="12">
    <location>
        <begin position="245"/>
        <end position="250"/>
    </location>
</feature>
<feature type="helix" evidence="12">
    <location>
        <begin position="255"/>
        <end position="279"/>
    </location>
</feature>
<feature type="turn" evidence="12">
    <location>
        <begin position="282"/>
        <end position="285"/>
    </location>
</feature>
<feature type="helix" evidence="12">
    <location>
        <begin position="286"/>
        <end position="289"/>
    </location>
</feature>
<feature type="helix" evidence="12">
    <location>
        <begin position="293"/>
        <end position="311"/>
    </location>
</feature>
<feature type="turn" evidence="12">
    <location>
        <begin position="315"/>
        <end position="317"/>
    </location>
</feature>
<feature type="strand" evidence="12">
    <location>
        <begin position="323"/>
        <end position="330"/>
    </location>
</feature>
<feature type="strand" evidence="12">
    <location>
        <begin position="336"/>
        <end position="338"/>
    </location>
</feature>
<feature type="helix" evidence="12">
    <location>
        <begin position="341"/>
        <end position="345"/>
    </location>
</feature>
<feature type="turn" evidence="12">
    <location>
        <begin position="351"/>
        <end position="353"/>
    </location>
</feature>
<feature type="helix" evidence="12">
    <location>
        <begin position="354"/>
        <end position="356"/>
    </location>
</feature>
<feature type="helix" evidence="12">
    <location>
        <begin position="364"/>
        <end position="369"/>
    </location>
</feature>
<feature type="helix" evidence="12">
    <location>
        <begin position="373"/>
        <end position="384"/>
    </location>
</feature>
<feature type="strand" evidence="12">
    <location>
        <begin position="395"/>
        <end position="397"/>
    </location>
</feature>
<feature type="helix" evidence="12">
    <location>
        <begin position="409"/>
        <end position="439"/>
    </location>
</feature>
<feature type="helix" evidence="12">
    <location>
        <begin position="452"/>
        <end position="455"/>
    </location>
</feature>
<dbReference type="EMBL" id="M21538">
    <property type="protein sequence ID" value="AAA85378.1"/>
    <property type="status" value="ALT_INIT"/>
    <property type="molecule type" value="Genomic_DNA"/>
</dbReference>
<dbReference type="EMBL" id="BA000022">
    <property type="protein sequence ID" value="BAA17799.2"/>
    <property type="molecule type" value="Genomic_DNA"/>
</dbReference>
<dbReference type="EMBL" id="X07018">
    <property type="protein sequence ID" value="CAA30071.1"/>
    <property type="status" value="ALT_INIT"/>
    <property type="molecule type" value="Genomic_DNA"/>
</dbReference>
<dbReference type="PIR" id="S06469">
    <property type="entry name" value="S06469"/>
</dbReference>
<dbReference type="PDB" id="6WJ6">
    <property type="method" value="EM"/>
    <property type="resolution" value="2.58 A"/>
    <property type="chains" value="C=1-460"/>
</dbReference>
<dbReference type="PDB" id="7N8O">
    <property type="method" value="EM"/>
    <property type="resolution" value="1.93 A"/>
    <property type="chains" value="C/c=11-460"/>
</dbReference>
<dbReference type="PDB" id="7RCV">
    <property type="method" value="EM"/>
    <property type="resolution" value="2.01 A"/>
    <property type="chains" value="C/c=11-460"/>
</dbReference>
<dbReference type="PDB" id="8TOW">
    <property type="method" value="EM"/>
    <property type="resolution" value="2.14 A"/>
    <property type="chains" value="C/c=1-460"/>
</dbReference>
<dbReference type="PDB" id="9EH5">
    <property type="method" value="EM"/>
    <property type="resolution" value="1.97 A"/>
    <property type="chains" value="C/c=1-460"/>
</dbReference>
<dbReference type="PDBsum" id="6WJ6"/>
<dbReference type="PDBsum" id="7N8O"/>
<dbReference type="PDBsum" id="7RCV"/>
<dbReference type="PDBsum" id="8TOW"/>
<dbReference type="PDBsum" id="9EH5"/>
<dbReference type="EMDB" id="EMD-21690"/>
<dbReference type="EMDB" id="EMD-24239"/>
<dbReference type="EMDB" id="EMD-24407"/>
<dbReference type="EMDB" id="EMD-41460"/>
<dbReference type="EMDB" id="EMD-48046"/>
<dbReference type="SMR" id="P09193"/>
<dbReference type="IntAct" id="P09193">
    <property type="interactions" value="4"/>
</dbReference>
<dbReference type="STRING" id="1148.gene:10498667"/>
<dbReference type="TCDB" id="3.E.2.2.2">
    <property type="family name" value="the photosynthetic reaction center (prc) family"/>
</dbReference>
<dbReference type="PaxDb" id="1148-163937832"/>
<dbReference type="EnsemblBacteria" id="BAA17799">
    <property type="protein sequence ID" value="BAA17799"/>
    <property type="gene ID" value="BAA17799"/>
</dbReference>
<dbReference type="KEGG" id="syn:sll0851"/>
<dbReference type="eggNOG" id="ENOG502Z7VA">
    <property type="taxonomic scope" value="Bacteria"/>
</dbReference>
<dbReference type="InParanoid" id="P09193"/>
<dbReference type="PhylomeDB" id="P09193"/>
<dbReference type="BioCyc" id="MetaCyc:PSBC-MONOMER"/>
<dbReference type="Proteomes" id="UP000001425">
    <property type="component" value="Chromosome"/>
</dbReference>
<dbReference type="GO" id="GO:0031676">
    <property type="term" value="C:plasma membrane-derived thylakoid membrane"/>
    <property type="evidence" value="ECO:0007669"/>
    <property type="project" value="UniProtKB-SubCell"/>
</dbReference>
<dbReference type="GO" id="GO:0030096">
    <property type="term" value="C:plasma membrane-derived thylakoid photosystem II"/>
    <property type="evidence" value="ECO:0000314"/>
    <property type="project" value="UniProtKB"/>
</dbReference>
<dbReference type="GO" id="GO:0016168">
    <property type="term" value="F:chlorophyll binding"/>
    <property type="evidence" value="ECO:0007669"/>
    <property type="project" value="UniProtKB-UniRule"/>
</dbReference>
<dbReference type="GO" id="GO:0045156">
    <property type="term" value="F:electron transporter, transferring electrons within the cyclic electron transport pathway of photosynthesis activity"/>
    <property type="evidence" value="ECO:0007669"/>
    <property type="project" value="InterPro"/>
</dbReference>
<dbReference type="GO" id="GO:0046872">
    <property type="term" value="F:metal ion binding"/>
    <property type="evidence" value="ECO:0007669"/>
    <property type="project" value="UniProtKB-KW"/>
</dbReference>
<dbReference type="GO" id="GO:0009772">
    <property type="term" value="P:photosynthetic electron transport in photosystem II"/>
    <property type="evidence" value="ECO:0007669"/>
    <property type="project" value="InterPro"/>
</dbReference>
<dbReference type="FunFam" id="1.10.10.670:FF:000001">
    <property type="entry name" value="Photosystem II CP43 reaction center protein"/>
    <property type="match status" value="1"/>
</dbReference>
<dbReference type="Gene3D" id="1.10.10.670">
    <property type="entry name" value="photosystem ii from thermosynechococcus elongatus"/>
    <property type="match status" value="1"/>
</dbReference>
<dbReference type="HAMAP" id="MF_01496">
    <property type="entry name" value="PSII_PsbC_CP43"/>
    <property type="match status" value="1"/>
</dbReference>
<dbReference type="InterPro" id="IPR000932">
    <property type="entry name" value="PS_antenna-like"/>
</dbReference>
<dbReference type="InterPro" id="IPR036001">
    <property type="entry name" value="PS_II_antenna-like_sf"/>
</dbReference>
<dbReference type="InterPro" id="IPR005869">
    <property type="entry name" value="PSII_PsbC"/>
</dbReference>
<dbReference type="InterPro" id="IPR044900">
    <property type="entry name" value="PSII_PsbC_sf"/>
</dbReference>
<dbReference type="NCBIfam" id="TIGR03041">
    <property type="entry name" value="PS_antenn_a_b"/>
    <property type="match status" value="1"/>
</dbReference>
<dbReference type="NCBIfam" id="TIGR01153">
    <property type="entry name" value="psbC"/>
    <property type="match status" value="1"/>
</dbReference>
<dbReference type="Pfam" id="PF00421">
    <property type="entry name" value="PSII"/>
    <property type="match status" value="1"/>
</dbReference>
<dbReference type="SUPFAM" id="SSF161077">
    <property type="entry name" value="Photosystem II antenna protein-like"/>
    <property type="match status" value="1"/>
</dbReference>
<keyword id="KW-0002">3D-structure</keyword>
<keyword id="KW-0148">Chlorophyll</keyword>
<keyword id="KW-0157">Chromophore</keyword>
<keyword id="KW-0464">Manganese</keyword>
<keyword id="KW-0472">Membrane</keyword>
<keyword id="KW-0479">Metal-binding</keyword>
<keyword id="KW-0602">Photosynthesis</keyword>
<keyword id="KW-0604">Photosystem II</keyword>
<keyword id="KW-1185">Reference proteome</keyword>
<keyword id="KW-0793">Thylakoid</keyword>
<keyword id="KW-0812">Transmembrane</keyword>
<keyword id="KW-1133">Transmembrane helix</keyword>
<accession>P09193</accession>
<accession>P73749</accession>
<evidence type="ECO:0000255" key="1">
    <source>
        <dbReference type="HAMAP-Rule" id="MF_01496"/>
    </source>
</evidence>
<evidence type="ECO:0000269" key="2">
    <source>
    </source>
</evidence>
<evidence type="ECO:0000269" key="3">
    <source>
    </source>
</evidence>
<evidence type="ECO:0000269" key="4">
    <source>
    </source>
</evidence>
<evidence type="ECO:0000269" key="5">
    <source>
    </source>
</evidence>
<evidence type="ECO:0000269" key="6">
    <source>
    </source>
</evidence>
<evidence type="ECO:0000303" key="7">
    <source>
    </source>
</evidence>
<evidence type="ECO:0000305" key="8"/>
<evidence type="ECO:0000312" key="9">
    <source>
        <dbReference type="PDB" id="7N8O"/>
    </source>
</evidence>
<evidence type="ECO:0007744" key="10">
    <source>
        <dbReference type="PDB" id="7N8O"/>
    </source>
</evidence>
<evidence type="ECO:0007744" key="11">
    <source>
        <dbReference type="PDB" id="7RCV"/>
    </source>
</evidence>
<evidence type="ECO:0007829" key="12">
    <source>
        <dbReference type="PDB" id="7N8O"/>
    </source>
</evidence>
<gene>
    <name evidence="1 7" type="primary">psbC</name>
    <name type="ordered locus">sll0851</name>
</gene>
<proteinExistence type="evidence at protein level"/>
<reference key="1">
    <citation type="journal article" date="1988" name="Plant Mol. Biol.">
        <title>Nucleotide sequence of psbC, the gene encoding the CP-43 chlorophyll a-binding protein of photosystem II, in the cyanobacterium Synechocystis 6803.</title>
        <authorList>
            <person name="Chisholm D."/>
            <person name="Williams J.G.K."/>
        </authorList>
    </citation>
    <scope>NUCLEOTIDE SEQUENCE [GENOMIC DNA]</scope>
    <source>
        <strain>ATCC 27184 / PCC 6803 / Kazusa</strain>
    </source>
</reference>
<reference key="2">
    <citation type="journal article" date="1996" name="DNA Res.">
        <title>Sequence analysis of the genome of the unicellular cyanobacterium Synechocystis sp. strain PCC6803. II. Sequence determination of the entire genome and assignment of potential protein-coding regions.</title>
        <authorList>
            <person name="Kaneko T."/>
            <person name="Sato S."/>
            <person name="Kotani H."/>
            <person name="Tanaka A."/>
            <person name="Asamizu E."/>
            <person name="Nakamura Y."/>
            <person name="Miyajima N."/>
            <person name="Hirosawa M."/>
            <person name="Sugiura M."/>
            <person name="Sasamoto S."/>
            <person name="Kimura T."/>
            <person name="Hosouchi T."/>
            <person name="Matsuno A."/>
            <person name="Muraki A."/>
            <person name="Nakazaki N."/>
            <person name="Naruo K."/>
            <person name="Okumura S."/>
            <person name="Shimpo S."/>
            <person name="Takeuchi C."/>
            <person name="Wada T."/>
            <person name="Watanabe A."/>
            <person name="Yamada M."/>
            <person name="Yasuda M."/>
            <person name="Tabata S."/>
        </authorList>
    </citation>
    <scope>NUCLEOTIDE SEQUENCE [LARGE SCALE GENOMIC DNA]</scope>
    <source>
        <strain>ATCC 27184 / PCC 6803 / Kazusa</strain>
    </source>
</reference>
<reference key="3">
    <citation type="journal article" date="1988" name="EMBO J.">
        <title>Molecular analysis of a mutant defective in photosynthetic oxygen evolution and isolation of a complementing clone by a novel screening procedure.</title>
        <authorList>
            <person name="Dzelzkalns V.A."/>
            <person name="Bogorad L."/>
        </authorList>
    </citation>
    <scope>NUCLEOTIDE SEQUENCE [GENOMIC DNA] OF 1-288</scope>
</reference>
<reference key="4">
    <citation type="journal article" date="1991" name="Biochemistry">
        <title>Site-directed mutagenesis of the psbC gene of photosystem II: isolation and functional characterization of CP43-less photosystem II core complexes.</title>
        <authorList>
            <person name="Roegner M."/>
            <person name="Chisholm D.A."/>
            <person name="Diner B.A."/>
        </authorList>
    </citation>
    <scope>FUNCTION</scope>
    <scope>DISRUPTION PHENOTYPE</scope>
    <source>
        <strain>ATCC 27184 / PCC 6803 / Kazusa</strain>
    </source>
</reference>
<reference key="5">
    <citation type="journal article" date="1998" name="FEBS Lett.">
        <title>Thylakoid protein phosphorylation in evolutionally divergent species with oxygenic photosynthesis.</title>
        <authorList>
            <person name="Pursiheimo S."/>
            <person name="Rintamaeki E."/>
            <person name="Baena-Gonzalez E."/>
            <person name="Aro E.-M."/>
        </authorList>
    </citation>
    <scope>SUBCELLULAR LOCATION</scope>
    <scope>LACK OF PHOSPHORYLATION</scope>
    <source>
        <strain>ATCC 27184 / PCC 6803 / Kazusa</strain>
    </source>
</reference>
<reference key="6">
    <citation type="journal article" date="2002" name="Biochemistry">
        <title>Proteomic analysis of a highly active photosystem II preparation from the cyanobacterium Synechocystis sp. PCC 6803 reveals the presence of novel polypeptides.</title>
        <authorList>
            <person name="Kashino Y."/>
            <person name="Lauber W.M."/>
            <person name="Carroll J.A."/>
            <person name="Wang Q."/>
            <person name="Whitmarsh J."/>
            <person name="Satoh K."/>
            <person name="Pakrasi H.B."/>
        </authorList>
    </citation>
    <scope>IDENTIFICATION BY MASS SPECTROMETRY</scope>
    <scope>SUBUNIT</scope>
    <scope>SUBCELLULAR LOCATION</scope>
    <source>
        <strain>ATCC 27184 / PCC 6803 / Kazusa</strain>
    </source>
</reference>
<reference key="7">
    <citation type="journal article" date="2012" name="Philos. Trans. R. Soc. Lond., B, Biol. Sci.">
        <title>Subunit composition of CP43-less photosystem II complexes of Synechocystis sp. PCC 6803: implications for the assembly and repair of photosystem II.</title>
        <authorList>
            <person name="Boehm M."/>
            <person name="Yu J."/>
            <person name="Reisinger V."/>
            <person name="Beckova M."/>
            <person name="Eichacker L.A."/>
            <person name="Schlodder E."/>
            <person name="Komenda J."/>
            <person name="Nixon P.J."/>
        </authorList>
    </citation>
    <scope>FUNCTION</scope>
    <scope>DISRUPTION PHENOTYPE</scope>
    <source>
        <strain>ATCC 27184 / PCC 6803 / Kazusa</strain>
    </source>
</reference>
<reference evidence="10 11" key="8">
    <citation type="journal article" date="2022" name="Proc. Natl. Acad. Sci. U.S.A.">
        <title>High-resolution cryo-electron microscopy structure of photosystem II from the mesophilic cyanobacterium, Synechocystis sp. PCC 6803.</title>
        <authorList>
            <person name="Gisriel C.J."/>
            <person name="Wang J."/>
            <person name="Liu J."/>
            <person name="Flesher D.A."/>
            <person name="Reiss K.M."/>
            <person name="Huang H.L."/>
            <person name="Yang K.R."/>
            <person name="Armstrong W.H."/>
            <person name="Gunner M.R."/>
            <person name="Batista V.S."/>
            <person name="Debus R.J."/>
            <person name="Brudvig G.W."/>
        </authorList>
    </citation>
    <scope>STRUCTURE BY ELECTRON MICROSCOPY (1.93 ANGSTROMS) OF 11-460</scope>
    <scope>FUNCTION</scope>
    <scope>COFACTOR</scope>
    <scope>SUBUNIT</scope>
    <scope>SUBCELLULAR LOCATION</scope>
    <scope>TOPOLOGY</scope>
    <source>
        <strain>ATCC 27184 / PCC 6803 / Kazusa</strain>
    </source>
</reference>
<organism>
    <name type="scientific">Synechocystis sp. (strain ATCC 27184 / PCC 6803 / Kazusa)</name>
    <dbReference type="NCBI Taxonomy" id="1111708"/>
    <lineage>
        <taxon>Bacteria</taxon>
        <taxon>Bacillati</taxon>
        <taxon>Cyanobacteriota</taxon>
        <taxon>Cyanophyceae</taxon>
        <taxon>Synechococcales</taxon>
        <taxon>Merismopediaceae</taxon>
        <taxon>Synechocystis</taxon>
    </lineage>
</organism>
<name>PSBC_SYNY3</name>
<sequence>MVTLSNTSMVGGRDLPSTGFAWWSGNARLINLSGKLLGAHVAHAGLIVFWAGAMTLFEVAHFIPEKPMYEQGLILLPHIATLGWGVGPAGEVTDIFPFFVVGVLHLISSAVLGLGGIYHALRGPEVLEEYSSFFGYDWKDKNQMTNIIGYHLILLGCGALLLVFKAMFFGGVYDTWAPGGGDVRVITNPTLNPAIIFGYLLKAPFGGEGWIISVNNMEDIIGGHIWIGLICISGGIWHILTKPFGWARRALIWSGEAYLSYSLGALSLMGFIASVFVWFNNTAYPSEFYGPTGMEASQSQAFTFLVRDQRLGANIASAQGPTGLGKYLMRSPSGEIIFGGETMRFWDFRGPWLEPLRGPNGLDLDKLRNDIQPWQVRRAAEYMTHAPLGSLNSVGGVITDVNSFNYVSPRAWLATSHFVLGFFFLVGHLWHAGRARAAAAGFEKGIDRETEPTLFMPDLD</sequence>